<reference key="1">
    <citation type="journal article" date="2011" name="J. Bacteriol.">
        <title>Comparative genomics of 28 Salmonella enterica isolates: evidence for CRISPR-mediated adaptive sublineage evolution.</title>
        <authorList>
            <person name="Fricke W.F."/>
            <person name="Mammel M.K."/>
            <person name="McDermott P.F."/>
            <person name="Tartera C."/>
            <person name="White D.G."/>
            <person name="Leclerc J.E."/>
            <person name="Ravel J."/>
            <person name="Cebula T.A."/>
        </authorList>
    </citation>
    <scope>NUCLEOTIDE SEQUENCE [LARGE SCALE GENOMIC DNA]</scope>
    <source>
        <strain>SL476</strain>
    </source>
</reference>
<gene>
    <name evidence="1" type="primary">nagK</name>
    <name type="ordered locus">SeHA_C1335</name>
</gene>
<accession>B4TFJ6</accession>
<organism>
    <name type="scientific">Salmonella heidelberg (strain SL476)</name>
    <dbReference type="NCBI Taxonomy" id="454169"/>
    <lineage>
        <taxon>Bacteria</taxon>
        <taxon>Pseudomonadati</taxon>
        <taxon>Pseudomonadota</taxon>
        <taxon>Gammaproteobacteria</taxon>
        <taxon>Enterobacterales</taxon>
        <taxon>Enterobacteriaceae</taxon>
        <taxon>Salmonella</taxon>
    </lineage>
</organism>
<evidence type="ECO:0000255" key="1">
    <source>
        <dbReference type="HAMAP-Rule" id="MF_01271"/>
    </source>
</evidence>
<comment type="function">
    <text evidence="1">Catalyzes the phosphorylation of N-acetyl-D-glucosamine (GlcNAc) derived from cell-wall degradation, yielding GlcNAc-6-P.</text>
</comment>
<comment type="catalytic activity">
    <reaction evidence="1">
        <text>N-acetyl-D-glucosamine + ATP = N-acetyl-D-glucosamine 6-phosphate + ADP + H(+)</text>
        <dbReference type="Rhea" id="RHEA:17417"/>
        <dbReference type="ChEBI" id="CHEBI:15378"/>
        <dbReference type="ChEBI" id="CHEBI:30616"/>
        <dbReference type="ChEBI" id="CHEBI:57513"/>
        <dbReference type="ChEBI" id="CHEBI:456216"/>
        <dbReference type="ChEBI" id="CHEBI:506227"/>
        <dbReference type="EC" id="2.7.1.59"/>
    </reaction>
</comment>
<comment type="pathway">
    <text evidence="1">Cell wall biogenesis; peptidoglycan recycling.</text>
</comment>
<comment type="similarity">
    <text evidence="1">Belongs to the ROK (NagC/XylR) family. NagK subfamily.</text>
</comment>
<name>NAGK_SALHS</name>
<dbReference type="EC" id="2.7.1.59" evidence="1"/>
<dbReference type="EMBL" id="CP001120">
    <property type="protein sequence ID" value="ACF67573.1"/>
    <property type="molecule type" value="Genomic_DNA"/>
</dbReference>
<dbReference type="RefSeq" id="WP_000291320.1">
    <property type="nucleotide sequence ID" value="NC_011083.1"/>
</dbReference>
<dbReference type="SMR" id="B4TFJ6"/>
<dbReference type="KEGG" id="seh:SeHA_C1335"/>
<dbReference type="HOGENOM" id="CLU_036604_0_3_6"/>
<dbReference type="UniPathway" id="UPA00544"/>
<dbReference type="Proteomes" id="UP000001866">
    <property type="component" value="Chromosome"/>
</dbReference>
<dbReference type="GO" id="GO:0005524">
    <property type="term" value="F:ATP binding"/>
    <property type="evidence" value="ECO:0007669"/>
    <property type="project" value="UniProtKB-UniRule"/>
</dbReference>
<dbReference type="GO" id="GO:0045127">
    <property type="term" value="F:N-acetylglucosamine kinase activity"/>
    <property type="evidence" value="ECO:0007669"/>
    <property type="project" value="UniProtKB-UniRule"/>
</dbReference>
<dbReference type="GO" id="GO:0008270">
    <property type="term" value="F:zinc ion binding"/>
    <property type="evidence" value="ECO:0007669"/>
    <property type="project" value="UniProtKB-UniRule"/>
</dbReference>
<dbReference type="GO" id="GO:0006044">
    <property type="term" value="P:N-acetylglucosamine metabolic process"/>
    <property type="evidence" value="ECO:0007669"/>
    <property type="project" value="UniProtKB-UniRule"/>
</dbReference>
<dbReference type="GO" id="GO:0009254">
    <property type="term" value="P:peptidoglycan turnover"/>
    <property type="evidence" value="ECO:0007669"/>
    <property type="project" value="UniProtKB-UniRule"/>
</dbReference>
<dbReference type="CDD" id="cd24057">
    <property type="entry name" value="ASKHA_NBD_ROK_NAGK"/>
    <property type="match status" value="1"/>
</dbReference>
<dbReference type="FunFam" id="3.30.420.40:FF:000049">
    <property type="entry name" value="N-acetyl-D-glucosamine kinase"/>
    <property type="match status" value="1"/>
</dbReference>
<dbReference type="FunFam" id="3.30.420.40:FF:000051">
    <property type="entry name" value="N-acetyl-D-glucosamine kinase"/>
    <property type="match status" value="1"/>
</dbReference>
<dbReference type="Gene3D" id="3.30.420.40">
    <property type="match status" value="2"/>
</dbReference>
<dbReference type="HAMAP" id="MF_01271">
    <property type="entry name" value="GlcNAc_kinase"/>
    <property type="match status" value="1"/>
</dbReference>
<dbReference type="InterPro" id="IPR043129">
    <property type="entry name" value="ATPase_NBD"/>
</dbReference>
<dbReference type="InterPro" id="IPR023505">
    <property type="entry name" value="N-acetyl-D-glucosamine_kinase"/>
</dbReference>
<dbReference type="InterPro" id="IPR000600">
    <property type="entry name" value="ROK"/>
</dbReference>
<dbReference type="InterPro" id="IPR049874">
    <property type="entry name" value="ROK_cs"/>
</dbReference>
<dbReference type="NCBIfam" id="NF009835">
    <property type="entry name" value="PRK13310.1"/>
    <property type="match status" value="1"/>
</dbReference>
<dbReference type="PANTHER" id="PTHR18964:SF162">
    <property type="entry name" value="N-ACETYL-D-GLUCOSAMINE KINASE"/>
    <property type="match status" value="1"/>
</dbReference>
<dbReference type="PANTHER" id="PTHR18964">
    <property type="entry name" value="ROK (REPRESSOR, ORF, KINASE) FAMILY"/>
    <property type="match status" value="1"/>
</dbReference>
<dbReference type="Pfam" id="PF00480">
    <property type="entry name" value="ROK"/>
    <property type="match status" value="1"/>
</dbReference>
<dbReference type="SUPFAM" id="SSF53067">
    <property type="entry name" value="Actin-like ATPase domain"/>
    <property type="match status" value="1"/>
</dbReference>
<dbReference type="PROSITE" id="PS01125">
    <property type="entry name" value="ROK"/>
    <property type="match status" value="1"/>
</dbReference>
<feature type="chain" id="PRO_1000140194" description="N-acetyl-D-glucosamine kinase">
    <location>
        <begin position="1"/>
        <end position="303"/>
    </location>
</feature>
<feature type="binding site" evidence="1">
    <location>
        <begin position="4"/>
        <end position="11"/>
    </location>
    <ligand>
        <name>ATP</name>
        <dbReference type="ChEBI" id="CHEBI:30616"/>
    </ligand>
</feature>
<feature type="binding site" evidence="1">
    <location>
        <begin position="133"/>
        <end position="140"/>
    </location>
    <ligand>
        <name>ATP</name>
        <dbReference type="ChEBI" id="CHEBI:30616"/>
    </ligand>
</feature>
<feature type="binding site" evidence="1">
    <location>
        <position position="157"/>
    </location>
    <ligand>
        <name>Zn(2+)</name>
        <dbReference type="ChEBI" id="CHEBI:29105"/>
    </ligand>
</feature>
<feature type="binding site" evidence="1">
    <location>
        <position position="177"/>
    </location>
    <ligand>
        <name>Zn(2+)</name>
        <dbReference type="ChEBI" id="CHEBI:29105"/>
    </ligand>
</feature>
<feature type="binding site" evidence="1">
    <location>
        <position position="179"/>
    </location>
    <ligand>
        <name>Zn(2+)</name>
        <dbReference type="ChEBI" id="CHEBI:29105"/>
    </ligand>
</feature>
<feature type="binding site" evidence="1">
    <location>
        <position position="184"/>
    </location>
    <ligand>
        <name>Zn(2+)</name>
        <dbReference type="ChEBI" id="CHEBI:29105"/>
    </ligand>
</feature>
<proteinExistence type="inferred from homology"/>
<keyword id="KW-0067">ATP-binding</keyword>
<keyword id="KW-0119">Carbohydrate metabolism</keyword>
<keyword id="KW-0418">Kinase</keyword>
<keyword id="KW-0479">Metal-binding</keyword>
<keyword id="KW-0547">Nucleotide-binding</keyword>
<keyword id="KW-0808">Transferase</keyword>
<keyword id="KW-0862">Zinc</keyword>
<protein>
    <recommendedName>
        <fullName evidence="1">N-acetyl-D-glucosamine kinase</fullName>
        <ecNumber evidence="1">2.7.1.59</ecNumber>
    </recommendedName>
    <alternativeName>
        <fullName evidence="1">GlcNAc kinase</fullName>
    </alternativeName>
</protein>
<sequence>MYYGFDIGGTKIALGVFDSTRRLQWEKRVPTPHASYSAFLDAVCELVAEADQRFGVKGSVGIGIPGMPETEDGTLYAANVPAASGKPLRADLSARLDRDVRLDNDANCFALSEAWDDEFTQYPLVMGLILGTGVGGGLVLNGKPITGQSYITGEFGHMRLPVDALTLMGFDFPLRRCGCGQMGCIENYLSGRGFAWLYQHYYDQSLQAPEIIALWEQGDEQAHAHVERYLDLLAVCLGNILTIVDPDLLVIGGGLSNFTAITTQLAERLPRHLLPVARAPRIERARHGDAGGMRGAAFLHLTD</sequence>